<organism>
    <name type="scientific">Cereibacter sphaeroides (strain ATCC 17023 / DSM 158 / JCM 6121 / CCUG 31486 / LMG 2827 / NBRC 12203 / NCIMB 8253 / ATH 2.4.1.)</name>
    <name type="common">Rhodobacter sphaeroides</name>
    <dbReference type="NCBI Taxonomy" id="272943"/>
    <lineage>
        <taxon>Bacteria</taxon>
        <taxon>Pseudomonadati</taxon>
        <taxon>Pseudomonadota</taxon>
        <taxon>Alphaproteobacteria</taxon>
        <taxon>Rhodobacterales</taxon>
        <taxon>Paracoccaceae</taxon>
        <taxon>Cereibacter</taxon>
    </lineage>
</organism>
<dbReference type="EC" id="3.1.3.5" evidence="1"/>
<dbReference type="EMBL" id="CP000143">
    <property type="protein sequence ID" value="ABA78704.1"/>
    <property type="molecule type" value="Genomic_DNA"/>
</dbReference>
<dbReference type="RefSeq" id="WP_011337560.1">
    <property type="nucleotide sequence ID" value="NZ_CP030271.1"/>
</dbReference>
<dbReference type="RefSeq" id="YP_352605.1">
    <property type="nucleotide sequence ID" value="NC_007493.2"/>
</dbReference>
<dbReference type="SMR" id="Q3J3D0"/>
<dbReference type="STRING" id="272943.RSP_2545"/>
<dbReference type="EnsemblBacteria" id="ABA78704">
    <property type="protein sequence ID" value="ABA78704"/>
    <property type="gene ID" value="RSP_2545"/>
</dbReference>
<dbReference type="GeneID" id="3720180"/>
<dbReference type="KEGG" id="rsp:RSP_2545"/>
<dbReference type="PATRIC" id="fig|272943.9.peg.1465"/>
<dbReference type="eggNOG" id="COG0496">
    <property type="taxonomic scope" value="Bacteria"/>
</dbReference>
<dbReference type="OrthoDB" id="9780815at2"/>
<dbReference type="PhylomeDB" id="Q3J3D0"/>
<dbReference type="Proteomes" id="UP000002703">
    <property type="component" value="Chromosome 1"/>
</dbReference>
<dbReference type="GO" id="GO:0005737">
    <property type="term" value="C:cytoplasm"/>
    <property type="evidence" value="ECO:0007669"/>
    <property type="project" value="UniProtKB-SubCell"/>
</dbReference>
<dbReference type="GO" id="GO:0008254">
    <property type="term" value="F:3'-nucleotidase activity"/>
    <property type="evidence" value="ECO:0007669"/>
    <property type="project" value="TreeGrafter"/>
</dbReference>
<dbReference type="GO" id="GO:0008253">
    <property type="term" value="F:5'-nucleotidase activity"/>
    <property type="evidence" value="ECO:0007669"/>
    <property type="project" value="UniProtKB-UniRule"/>
</dbReference>
<dbReference type="GO" id="GO:0004309">
    <property type="term" value="F:exopolyphosphatase activity"/>
    <property type="evidence" value="ECO:0007669"/>
    <property type="project" value="TreeGrafter"/>
</dbReference>
<dbReference type="GO" id="GO:0046872">
    <property type="term" value="F:metal ion binding"/>
    <property type="evidence" value="ECO:0007669"/>
    <property type="project" value="UniProtKB-UniRule"/>
</dbReference>
<dbReference type="GO" id="GO:0000166">
    <property type="term" value="F:nucleotide binding"/>
    <property type="evidence" value="ECO:0007669"/>
    <property type="project" value="UniProtKB-KW"/>
</dbReference>
<dbReference type="Gene3D" id="3.40.1210.10">
    <property type="entry name" value="Survival protein SurE-like phosphatase/nucleotidase"/>
    <property type="match status" value="1"/>
</dbReference>
<dbReference type="HAMAP" id="MF_00060">
    <property type="entry name" value="SurE"/>
    <property type="match status" value="1"/>
</dbReference>
<dbReference type="InterPro" id="IPR030048">
    <property type="entry name" value="SurE"/>
</dbReference>
<dbReference type="InterPro" id="IPR002828">
    <property type="entry name" value="SurE-like_Pase/nucleotidase"/>
</dbReference>
<dbReference type="InterPro" id="IPR036523">
    <property type="entry name" value="SurE-like_sf"/>
</dbReference>
<dbReference type="NCBIfam" id="NF001490">
    <property type="entry name" value="PRK00346.1-4"/>
    <property type="match status" value="1"/>
</dbReference>
<dbReference type="NCBIfam" id="NF010541">
    <property type="entry name" value="PRK13931.1"/>
    <property type="match status" value="1"/>
</dbReference>
<dbReference type="NCBIfam" id="TIGR00087">
    <property type="entry name" value="surE"/>
    <property type="match status" value="1"/>
</dbReference>
<dbReference type="PANTHER" id="PTHR30457">
    <property type="entry name" value="5'-NUCLEOTIDASE SURE"/>
    <property type="match status" value="1"/>
</dbReference>
<dbReference type="PANTHER" id="PTHR30457:SF12">
    <property type="entry name" value="5'_3'-NUCLEOTIDASE SURE"/>
    <property type="match status" value="1"/>
</dbReference>
<dbReference type="Pfam" id="PF01975">
    <property type="entry name" value="SurE"/>
    <property type="match status" value="1"/>
</dbReference>
<dbReference type="SUPFAM" id="SSF64167">
    <property type="entry name" value="SurE-like"/>
    <property type="match status" value="1"/>
</dbReference>
<reference key="1">
    <citation type="submission" date="2005-09" db="EMBL/GenBank/DDBJ databases">
        <title>Complete sequence of chromosome 1 of Rhodobacter sphaeroides 2.4.1.</title>
        <authorList>
            <person name="Copeland A."/>
            <person name="Lucas S."/>
            <person name="Lapidus A."/>
            <person name="Barry K."/>
            <person name="Detter J.C."/>
            <person name="Glavina T."/>
            <person name="Hammon N."/>
            <person name="Israni S."/>
            <person name="Pitluck S."/>
            <person name="Richardson P."/>
            <person name="Mackenzie C."/>
            <person name="Choudhary M."/>
            <person name="Larimer F."/>
            <person name="Hauser L.J."/>
            <person name="Land M."/>
            <person name="Donohue T.J."/>
            <person name="Kaplan S."/>
        </authorList>
    </citation>
    <scope>NUCLEOTIDE SEQUENCE [LARGE SCALE GENOMIC DNA]</scope>
    <source>
        <strain>ATCC 17023 / DSM 158 / JCM 6121 / CCUG 31486 / LMG 2827 / NBRC 12203 / NCIMB 8253 / ATH 2.4.1.</strain>
    </source>
</reference>
<evidence type="ECO:0000255" key="1">
    <source>
        <dbReference type="HAMAP-Rule" id="MF_00060"/>
    </source>
</evidence>
<gene>
    <name evidence="1" type="primary">surE</name>
    <name type="ordered locus">RHOS4_11360</name>
    <name type="ORF">RSP_2545</name>
</gene>
<proteinExistence type="inferred from homology"/>
<feature type="chain" id="PRO_0000235643" description="5'-nucleotidase SurE">
    <location>
        <begin position="1"/>
        <end position="261"/>
    </location>
</feature>
<feature type="binding site" evidence="1">
    <location>
        <position position="8"/>
    </location>
    <ligand>
        <name>a divalent metal cation</name>
        <dbReference type="ChEBI" id="CHEBI:60240"/>
    </ligand>
</feature>
<feature type="binding site" evidence="1">
    <location>
        <position position="9"/>
    </location>
    <ligand>
        <name>a divalent metal cation</name>
        <dbReference type="ChEBI" id="CHEBI:60240"/>
    </ligand>
</feature>
<feature type="binding site" evidence="1">
    <location>
        <position position="43"/>
    </location>
    <ligand>
        <name>a divalent metal cation</name>
        <dbReference type="ChEBI" id="CHEBI:60240"/>
    </ligand>
</feature>
<feature type="binding site" evidence="1">
    <location>
        <position position="96"/>
    </location>
    <ligand>
        <name>a divalent metal cation</name>
        <dbReference type="ChEBI" id="CHEBI:60240"/>
    </ligand>
</feature>
<protein>
    <recommendedName>
        <fullName evidence="1">5'-nucleotidase SurE</fullName>
        <ecNumber evidence="1">3.1.3.5</ecNumber>
    </recommendedName>
    <alternativeName>
        <fullName evidence="1">Nucleoside 5'-monophosphate phosphohydrolase</fullName>
    </alternativeName>
</protein>
<accession>Q3J3D0</accession>
<keyword id="KW-0963">Cytoplasm</keyword>
<keyword id="KW-0378">Hydrolase</keyword>
<keyword id="KW-0479">Metal-binding</keyword>
<keyword id="KW-0547">Nucleotide-binding</keyword>
<keyword id="KW-1185">Reference proteome</keyword>
<comment type="function">
    <text evidence="1">Nucleotidase that shows phosphatase activity on nucleoside 5'-monophosphates.</text>
</comment>
<comment type="catalytic activity">
    <reaction evidence="1">
        <text>a ribonucleoside 5'-phosphate + H2O = a ribonucleoside + phosphate</text>
        <dbReference type="Rhea" id="RHEA:12484"/>
        <dbReference type="ChEBI" id="CHEBI:15377"/>
        <dbReference type="ChEBI" id="CHEBI:18254"/>
        <dbReference type="ChEBI" id="CHEBI:43474"/>
        <dbReference type="ChEBI" id="CHEBI:58043"/>
        <dbReference type="EC" id="3.1.3.5"/>
    </reaction>
</comment>
<comment type="cofactor">
    <cofactor evidence="1">
        <name>a divalent metal cation</name>
        <dbReference type="ChEBI" id="CHEBI:60240"/>
    </cofactor>
    <text evidence="1">Binds 1 divalent metal cation per subunit.</text>
</comment>
<comment type="subcellular location">
    <subcellularLocation>
        <location evidence="1">Cytoplasm</location>
    </subcellularLocation>
</comment>
<comment type="similarity">
    <text evidence="1">Belongs to the SurE nucleotidase family.</text>
</comment>
<sequence>MRILITNDDGINAPGLEVLEQIALELAGPEGEVWTVAPAFEQSGVSHAISYTHPMMIAKLGPRRYAAEGSPADCVLAALYDVLQGARPDLVLSGVNRGNNSAENVLYSGTVGGALEAALQGLPAIALSQFLGPETEGLADPFECARTHGARIVRLLLERGLWDGEDYRLFYNVNFPPVPAANLRGHRVAAQGFRRDTSFGVEPHMSPSGRRFLWIRGGAQQSPTLPGTDAAVNLEGFVSITPLRADLTAHDRLAELEALIG</sequence>
<name>SURE_CERS4</name>